<name>SECF_RICRS</name>
<organism>
    <name type="scientific">Rickettsia rickettsii (strain Sheila Smith)</name>
    <dbReference type="NCBI Taxonomy" id="392021"/>
    <lineage>
        <taxon>Bacteria</taxon>
        <taxon>Pseudomonadati</taxon>
        <taxon>Pseudomonadota</taxon>
        <taxon>Alphaproteobacteria</taxon>
        <taxon>Rickettsiales</taxon>
        <taxon>Rickettsiaceae</taxon>
        <taxon>Rickettsieae</taxon>
        <taxon>Rickettsia</taxon>
        <taxon>spotted fever group</taxon>
    </lineage>
</organism>
<reference key="1">
    <citation type="journal article" date="2003" name="J. Bacteriol.">
        <title>Molecular and functional analysis of the lepB gene, encoding a type I signal peptidase from Rickettsia rickettsii and Rickettsia typhi.</title>
        <authorList>
            <person name="Rahman M.S."/>
            <person name="Simser J.A."/>
            <person name="Macaluso K.R."/>
            <person name="Azad A.F."/>
        </authorList>
    </citation>
    <scope>NUCLEOTIDE SEQUENCE [GENOMIC DNA]</scope>
    <scope>TRANSCRIPT ANALYSIS (OPERON STRUCTURE)</scope>
</reference>
<reference key="2">
    <citation type="submission" date="2007-09" db="EMBL/GenBank/DDBJ databases">
        <title>Complete genome sequence of Rickettsia rickettsii.</title>
        <authorList>
            <person name="Madan A."/>
            <person name="Fahey J."/>
            <person name="Helton E."/>
            <person name="Ketteman M."/>
            <person name="Madan A."/>
            <person name="Rodrigues S."/>
            <person name="Sanchez A."/>
            <person name="Dasch G."/>
            <person name="Eremeeva M."/>
        </authorList>
    </citation>
    <scope>NUCLEOTIDE SEQUENCE [LARGE SCALE GENOMIC DNA]</scope>
    <source>
        <strain>Sheila Smith</strain>
    </source>
</reference>
<comment type="function">
    <text evidence="1">Part of the Sec protein translocase complex. Interacts with the SecYEG preprotein conducting channel. SecDF uses the proton motive force (PMF) to complete protein translocation after the ATP-dependent function of SecA.</text>
</comment>
<comment type="subunit">
    <text evidence="1">Forms a complex with SecD. Part of the essential Sec protein translocation apparatus which comprises SecA, SecYEG and auxiliary proteins SecDF-YajC and YidC.</text>
</comment>
<comment type="subcellular location">
    <subcellularLocation>
        <location evidence="1">Cell inner membrane</location>
        <topology evidence="1">Multi-pass membrane protein</topology>
    </subcellularLocation>
</comment>
<comment type="miscellaneous">
    <text>Belongs to an operon consisting of at least secF-nuoF-lepB-rnc.</text>
</comment>
<comment type="similarity">
    <text evidence="1">Belongs to the SecD/SecF family. SecF subfamily.</text>
</comment>
<keyword id="KW-0997">Cell inner membrane</keyword>
<keyword id="KW-1003">Cell membrane</keyword>
<keyword id="KW-0472">Membrane</keyword>
<keyword id="KW-0653">Protein transport</keyword>
<keyword id="KW-0811">Translocation</keyword>
<keyword id="KW-0812">Transmembrane</keyword>
<keyword id="KW-1133">Transmembrane helix</keyword>
<keyword id="KW-0813">Transport</keyword>
<dbReference type="EMBL" id="AY134668">
    <property type="protein sequence ID" value="AAO00969.1"/>
    <property type="molecule type" value="Genomic_DNA"/>
</dbReference>
<dbReference type="EMBL" id="CP000848">
    <property type="protein sequence ID" value="ABV75760.1"/>
    <property type="molecule type" value="Genomic_DNA"/>
</dbReference>
<dbReference type="RefSeq" id="WP_012150372.1">
    <property type="nucleotide sequence ID" value="NZ_CP121767.1"/>
</dbReference>
<dbReference type="SMR" id="A8GQT5"/>
<dbReference type="GeneID" id="79936947"/>
<dbReference type="KEGG" id="rri:A1G_00890"/>
<dbReference type="HOGENOM" id="CLU_050012_1_1_5"/>
<dbReference type="Proteomes" id="UP000006832">
    <property type="component" value="Chromosome"/>
</dbReference>
<dbReference type="GO" id="GO:0005886">
    <property type="term" value="C:plasma membrane"/>
    <property type="evidence" value="ECO:0007669"/>
    <property type="project" value="UniProtKB-SubCell"/>
</dbReference>
<dbReference type="GO" id="GO:0015450">
    <property type="term" value="F:protein-transporting ATPase activity"/>
    <property type="evidence" value="ECO:0007669"/>
    <property type="project" value="InterPro"/>
</dbReference>
<dbReference type="GO" id="GO:0065002">
    <property type="term" value="P:intracellular protein transmembrane transport"/>
    <property type="evidence" value="ECO:0007669"/>
    <property type="project" value="UniProtKB-UniRule"/>
</dbReference>
<dbReference type="GO" id="GO:0006605">
    <property type="term" value="P:protein targeting"/>
    <property type="evidence" value="ECO:0007669"/>
    <property type="project" value="UniProtKB-UniRule"/>
</dbReference>
<dbReference type="GO" id="GO:0043952">
    <property type="term" value="P:protein transport by the Sec complex"/>
    <property type="evidence" value="ECO:0007669"/>
    <property type="project" value="UniProtKB-UniRule"/>
</dbReference>
<dbReference type="FunFam" id="1.20.1640.10:FF:000024">
    <property type="entry name" value="Multifunctional fusion protein"/>
    <property type="match status" value="1"/>
</dbReference>
<dbReference type="Gene3D" id="1.20.1640.10">
    <property type="entry name" value="Multidrug efflux transporter AcrB transmembrane domain"/>
    <property type="match status" value="1"/>
</dbReference>
<dbReference type="HAMAP" id="MF_01464_B">
    <property type="entry name" value="SecF_B"/>
    <property type="match status" value="1"/>
</dbReference>
<dbReference type="InterPro" id="IPR022813">
    <property type="entry name" value="SecD/SecF_arch_bac"/>
</dbReference>
<dbReference type="InterPro" id="IPR022645">
    <property type="entry name" value="SecD/SecF_bac"/>
</dbReference>
<dbReference type="InterPro" id="IPR022646">
    <property type="entry name" value="SecD/SecF_CS"/>
</dbReference>
<dbReference type="InterPro" id="IPR048634">
    <property type="entry name" value="SecD_SecF_C"/>
</dbReference>
<dbReference type="InterPro" id="IPR055344">
    <property type="entry name" value="SecD_SecF_C_bact"/>
</dbReference>
<dbReference type="InterPro" id="IPR005665">
    <property type="entry name" value="SecF_bac"/>
</dbReference>
<dbReference type="InterPro" id="IPR000731">
    <property type="entry name" value="SSD"/>
</dbReference>
<dbReference type="NCBIfam" id="TIGR00916">
    <property type="entry name" value="2A0604s01"/>
    <property type="match status" value="1"/>
</dbReference>
<dbReference type="NCBIfam" id="TIGR00966">
    <property type="entry name" value="transloc_SecF"/>
    <property type="match status" value="1"/>
</dbReference>
<dbReference type="PANTHER" id="PTHR30081:SF8">
    <property type="entry name" value="PROTEIN TRANSLOCASE SUBUNIT SECF"/>
    <property type="match status" value="1"/>
</dbReference>
<dbReference type="PANTHER" id="PTHR30081">
    <property type="entry name" value="PROTEIN-EXPORT MEMBRANE PROTEIN SEC"/>
    <property type="match status" value="1"/>
</dbReference>
<dbReference type="Pfam" id="PF07549">
    <property type="entry name" value="Sec_GG"/>
    <property type="match status" value="1"/>
</dbReference>
<dbReference type="Pfam" id="PF02355">
    <property type="entry name" value="SecD_SecF_C"/>
    <property type="match status" value="1"/>
</dbReference>
<dbReference type="PRINTS" id="PR01755">
    <property type="entry name" value="SECFTRNLCASE"/>
</dbReference>
<dbReference type="SUPFAM" id="SSF82866">
    <property type="entry name" value="Multidrug efflux transporter AcrB transmembrane domain"/>
    <property type="match status" value="1"/>
</dbReference>
<dbReference type="PROSITE" id="PS50156">
    <property type="entry name" value="SSD"/>
    <property type="match status" value="1"/>
</dbReference>
<accession>A8GQT5</accession>
<accession>Q8GE75</accession>
<evidence type="ECO:0000255" key="1">
    <source>
        <dbReference type="HAMAP-Rule" id="MF_01464"/>
    </source>
</evidence>
<feature type="chain" id="PRO_0000316283" description="Protein translocase subunit SecF">
    <location>
        <begin position="1"/>
        <end position="308"/>
    </location>
</feature>
<feature type="transmembrane region" description="Helical" evidence="1">
    <location>
        <begin position="28"/>
        <end position="48"/>
    </location>
</feature>
<feature type="transmembrane region" description="Helical" evidence="1">
    <location>
        <begin position="140"/>
        <end position="160"/>
    </location>
</feature>
<feature type="transmembrane region" description="Helical" evidence="1">
    <location>
        <begin position="164"/>
        <end position="184"/>
    </location>
</feature>
<feature type="transmembrane region" description="Helical" evidence="1">
    <location>
        <begin position="194"/>
        <end position="214"/>
    </location>
</feature>
<feature type="transmembrane region" description="Helical" evidence="1">
    <location>
        <begin position="246"/>
        <end position="266"/>
    </location>
</feature>
<feature type="transmembrane region" description="Helical" evidence="1">
    <location>
        <begin position="272"/>
        <end position="292"/>
    </location>
</feature>
<protein>
    <recommendedName>
        <fullName>Protein translocase subunit SecF</fullName>
    </recommendedName>
</protein>
<gene>
    <name evidence="1" type="primary">secF</name>
    <name type="ordered locus">A1G_00890</name>
</gene>
<proteinExistence type="evidence at transcript level"/>
<sequence length="308" mass="35076">MQIYPLRLLPNKIDFDFMNFKKVSYTFSIILSLISFIWIGIYKFNFGIDFAGGIVIEVRLDQAPDLPKMRGVLGKLGIGEVVLQNFGSERDLSIRFGSNSEENLMKNIELIKGSLQSNFPYKFEYRKVDFVGPQVGRQLIEAGAMAMLFSFLAIMVYIWVRFEWYFGFGILIALVHDVILALGFMSMTKLDFNLSTIAAVLTIIGYSVNDSVVIYDRIRENLRKYHKKNITEIINLSINETLSRTILTVITTLLANLALILFGGEAIRSFSILVFFGIIVGTYSSIFISAPILTMFVNRKFNKKVIER</sequence>